<evidence type="ECO:0000255" key="1">
    <source>
        <dbReference type="HAMAP-Rule" id="MF_00350"/>
    </source>
</evidence>
<sequence length="225" mass="24955">MKTIKEQLLSSCKPLDELLGGGFESGVVTQIFGEAGSGKTNICLQLAIECVKKGKKAIFIDTEGLSADRFKQIAGENARKIAQDIIIFEPHSFEEQYSAVRETEKISTENVGVIIVDSATAYYRFELDDEDSSIRTRRELSNQIGFLHSLARKRDIVVVITNQVYSDIKSNSLKPIGGSSLEHISKTIIQLEKTGTGSRRAKIWKHRSRPEGTTCEFTITADGVR</sequence>
<dbReference type="EMBL" id="CP000300">
    <property type="protein sequence ID" value="ABE52996.1"/>
    <property type="molecule type" value="Genomic_DNA"/>
</dbReference>
<dbReference type="RefSeq" id="WP_011500135.1">
    <property type="nucleotide sequence ID" value="NC_007955.1"/>
</dbReference>
<dbReference type="SMR" id="Q12U80"/>
<dbReference type="STRING" id="259564.Mbur_2123"/>
<dbReference type="GeneID" id="3998206"/>
<dbReference type="KEGG" id="mbu:Mbur_2123"/>
<dbReference type="HOGENOM" id="CLU_041732_2_0_2"/>
<dbReference type="OrthoDB" id="17644at2157"/>
<dbReference type="Proteomes" id="UP000001979">
    <property type="component" value="Chromosome"/>
</dbReference>
<dbReference type="GO" id="GO:0005524">
    <property type="term" value="F:ATP binding"/>
    <property type="evidence" value="ECO:0007669"/>
    <property type="project" value="UniProtKB-UniRule"/>
</dbReference>
<dbReference type="GO" id="GO:0016887">
    <property type="term" value="F:ATP hydrolysis activity"/>
    <property type="evidence" value="ECO:0007669"/>
    <property type="project" value="InterPro"/>
</dbReference>
<dbReference type="GO" id="GO:0140664">
    <property type="term" value="F:ATP-dependent DNA damage sensor activity"/>
    <property type="evidence" value="ECO:0007669"/>
    <property type="project" value="InterPro"/>
</dbReference>
<dbReference type="GO" id="GO:0003684">
    <property type="term" value="F:damaged DNA binding"/>
    <property type="evidence" value="ECO:0007669"/>
    <property type="project" value="UniProtKB-UniRule"/>
</dbReference>
<dbReference type="GO" id="GO:0006310">
    <property type="term" value="P:DNA recombination"/>
    <property type="evidence" value="ECO:0007669"/>
    <property type="project" value="UniProtKB-UniRule"/>
</dbReference>
<dbReference type="GO" id="GO:0006281">
    <property type="term" value="P:DNA repair"/>
    <property type="evidence" value="ECO:0007669"/>
    <property type="project" value="UniProtKB-UniRule"/>
</dbReference>
<dbReference type="CDD" id="cd01394">
    <property type="entry name" value="archRadB"/>
    <property type="match status" value="1"/>
</dbReference>
<dbReference type="Gene3D" id="3.40.50.300">
    <property type="entry name" value="P-loop containing nucleotide triphosphate hydrolases"/>
    <property type="match status" value="1"/>
</dbReference>
<dbReference type="HAMAP" id="MF_00350">
    <property type="entry name" value="RadB"/>
    <property type="match status" value="1"/>
</dbReference>
<dbReference type="InterPro" id="IPR003593">
    <property type="entry name" value="AAA+_ATPase"/>
</dbReference>
<dbReference type="InterPro" id="IPR013632">
    <property type="entry name" value="DNA_recomb/repair_Rad51_C"/>
</dbReference>
<dbReference type="InterPro" id="IPR011939">
    <property type="entry name" value="DNA_repair_and_recomb_RadB"/>
</dbReference>
<dbReference type="InterPro" id="IPR027417">
    <property type="entry name" value="P-loop_NTPase"/>
</dbReference>
<dbReference type="InterPro" id="IPR020588">
    <property type="entry name" value="RecA_ATP-bd"/>
</dbReference>
<dbReference type="NCBIfam" id="TIGR02237">
    <property type="entry name" value="recomb_radB"/>
    <property type="match status" value="1"/>
</dbReference>
<dbReference type="PANTHER" id="PTHR22942:SF47">
    <property type="entry name" value="DNA REPAIR AND RECOMBINATION PROTEIN RADB"/>
    <property type="match status" value="1"/>
</dbReference>
<dbReference type="PANTHER" id="PTHR22942">
    <property type="entry name" value="RECA/RAD51/RADA DNA STRAND-PAIRING FAMILY MEMBER"/>
    <property type="match status" value="1"/>
</dbReference>
<dbReference type="Pfam" id="PF08423">
    <property type="entry name" value="Rad51"/>
    <property type="match status" value="1"/>
</dbReference>
<dbReference type="PIRSF" id="PIRSF003336">
    <property type="entry name" value="RadB"/>
    <property type="match status" value="1"/>
</dbReference>
<dbReference type="PRINTS" id="PR01874">
    <property type="entry name" value="DNAREPAIRADA"/>
</dbReference>
<dbReference type="SMART" id="SM00382">
    <property type="entry name" value="AAA"/>
    <property type="match status" value="1"/>
</dbReference>
<dbReference type="SUPFAM" id="SSF52540">
    <property type="entry name" value="P-loop containing nucleoside triphosphate hydrolases"/>
    <property type="match status" value="1"/>
</dbReference>
<dbReference type="PROSITE" id="PS50162">
    <property type="entry name" value="RECA_2"/>
    <property type="match status" value="1"/>
</dbReference>
<proteinExistence type="inferred from homology"/>
<keyword id="KW-0067">ATP-binding</keyword>
<keyword id="KW-0227">DNA damage</keyword>
<keyword id="KW-0233">DNA recombination</keyword>
<keyword id="KW-0238">DNA-binding</keyword>
<keyword id="KW-0547">Nucleotide-binding</keyword>
<organism>
    <name type="scientific">Methanococcoides burtonii (strain DSM 6242 / NBRC 107633 / OCM 468 / ACE-M)</name>
    <dbReference type="NCBI Taxonomy" id="259564"/>
    <lineage>
        <taxon>Archaea</taxon>
        <taxon>Methanobacteriati</taxon>
        <taxon>Methanobacteriota</taxon>
        <taxon>Stenosarchaea group</taxon>
        <taxon>Methanomicrobia</taxon>
        <taxon>Methanosarcinales</taxon>
        <taxon>Methanosarcinaceae</taxon>
        <taxon>Methanococcoides</taxon>
    </lineage>
</organism>
<name>RADB_METBU</name>
<protein>
    <recommendedName>
        <fullName evidence="1">DNA repair and recombination protein RadB</fullName>
    </recommendedName>
</protein>
<reference key="1">
    <citation type="journal article" date="2009" name="ISME J.">
        <title>The genome sequence of the psychrophilic archaeon, Methanococcoides burtonii: the role of genome evolution in cold adaptation.</title>
        <authorList>
            <person name="Allen M.A."/>
            <person name="Lauro F.M."/>
            <person name="Williams T.J."/>
            <person name="Burg D."/>
            <person name="Siddiqui K.S."/>
            <person name="De Francisci D."/>
            <person name="Chong K.W."/>
            <person name="Pilak O."/>
            <person name="Chew H.H."/>
            <person name="De Maere M.Z."/>
            <person name="Ting L."/>
            <person name="Katrib M."/>
            <person name="Ng C."/>
            <person name="Sowers K.R."/>
            <person name="Galperin M.Y."/>
            <person name="Anderson I.J."/>
            <person name="Ivanova N."/>
            <person name="Dalin E."/>
            <person name="Martinez M."/>
            <person name="Lapidus A."/>
            <person name="Hauser L."/>
            <person name="Land M."/>
            <person name="Thomas T."/>
            <person name="Cavicchioli R."/>
        </authorList>
    </citation>
    <scope>NUCLEOTIDE SEQUENCE [LARGE SCALE GENOMIC DNA]</scope>
    <source>
        <strain>DSM 6242 / NBRC 107633 / OCM 468 / ACE-M</strain>
    </source>
</reference>
<comment type="function">
    <text evidence="1">Involved in DNA repair and in homologous recombination. May regulate the cleavage reactions of the branch-structured DNA. Has a very weak ATPase activity that is not stimulated by DNA. Binds DNA but does not promote DNA strands exchange.</text>
</comment>
<comment type="similarity">
    <text evidence="1">Belongs to the eukaryotic RecA-like protein family. RadB subfamily.</text>
</comment>
<feature type="chain" id="PRO_1000079372" description="DNA repair and recombination protein RadB">
    <location>
        <begin position="1"/>
        <end position="225"/>
    </location>
</feature>
<gene>
    <name evidence="1" type="primary">radB</name>
    <name type="ordered locus">Mbur_2123</name>
</gene>
<accession>Q12U80</accession>